<comment type="function">
    <text evidence="1">Hydrolyzes RNA 2',3'-cyclic phosphodiester to an RNA 2'-phosphomonoester.</text>
</comment>
<comment type="catalytic activity">
    <reaction evidence="1">
        <text>a 3'-end 2',3'-cyclophospho-ribonucleotide-RNA + H2O = a 3'-end 2'-phospho-ribonucleotide-RNA + H(+)</text>
        <dbReference type="Rhea" id="RHEA:11828"/>
        <dbReference type="Rhea" id="RHEA-COMP:10464"/>
        <dbReference type="Rhea" id="RHEA-COMP:17353"/>
        <dbReference type="ChEBI" id="CHEBI:15377"/>
        <dbReference type="ChEBI" id="CHEBI:15378"/>
        <dbReference type="ChEBI" id="CHEBI:83064"/>
        <dbReference type="ChEBI" id="CHEBI:173113"/>
        <dbReference type="EC" id="3.1.4.58"/>
    </reaction>
</comment>
<comment type="similarity">
    <text evidence="1">Belongs to the 2H phosphoesterase superfamily. ThpR family.</text>
</comment>
<reference key="1">
    <citation type="journal article" date="1999" name="Nature">
        <title>Evidence for lateral gene transfer between Archaea and Bacteria from genome sequence of Thermotoga maritima.</title>
        <authorList>
            <person name="Nelson K.E."/>
            <person name="Clayton R.A."/>
            <person name="Gill S.R."/>
            <person name="Gwinn M.L."/>
            <person name="Dodson R.J."/>
            <person name="Haft D.H."/>
            <person name="Hickey E.K."/>
            <person name="Peterson J.D."/>
            <person name="Nelson W.C."/>
            <person name="Ketchum K.A."/>
            <person name="McDonald L.A."/>
            <person name="Utterback T.R."/>
            <person name="Malek J.A."/>
            <person name="Linher K.D."/>
            <person name="Garrett M.M."/>
            <person name="Stewart A.M."/>
            <person name="Cotton M.D."/>
            <person name="Pratt M.S."/>
            <person name="Phillips C.A."/>
            <person name="Richardson D.L."/>
            <person name="Heidelberg J.F."/>
            <person name="Sutton G.G."/>
            <person name="Fleischmann R.D."/>
            <person name="Eisen J.A."/>
            <person name="White O."/>
            <person name="Salzberg S.L."/>
            <person name="Smith H.O."/>
            <person name="Venter J.C."/>
            <person name="Fraser C.M."/>
        </authorList>
    </citation>
    <scope>NUCLEOTIDE SEQUENCE [LARGE SCALE GENOMIC DNA]</scope>
    <source>
        <strain>ATCC 43589 / DSM 3109 / JCM 10099 / NBRC 100826 / MSB8</strain>
    </source>
</reference>
<keyword id="KW-0378">Hydrolase</keyword>
<keyword id="KW-1185">Reference proteome</keyword>
<gene>
    <name type="ordered locus">TM_1860</name>
</gene>
<dbReference type="EC" id="3.1.4.58" evidence="1"/>
<dbReference type="EMBL" id="AE000512">
    <property type="protein sequence ID" value="AAD36922.1"/>
    <property type="molecule type" value="Genomic_DNA"/>
</dbReference>
<dbReference type="PIR" id="E72201">
    <property type="entry name" value="E72201"/>
</dbReference>
<dbReference type="RefSeq" id="NP_229656.1">
    <property type="nucleotide sequence ID" value="NC_000853.1"/>
</dbReference>
<dbReference type="SMR" id="Q9X2H4"/>
<dbReference type="FunCoup" id="Q9X2H4">
    <property type="interactions" value="17"/>
</dbReference>
<dbReference type="STRING" id="243274.TM_1860"/>
<dbReference type="PaxDb" id="243274-THEMA_04870"/>
<dbReference type="EnsemblBacteria" id="AAD36922">
    <property type="protein sequence ID" value="AAD36922"/>
    <property type="gene ID" value="TM_1860"/>
</dbReference>
<dbReference type="KEGG" id="tma:TM1860"/>
<dbReference type="KEGG" id="tmi:THEMA_04870"/>
<dbReference type="KEGG" id="tmm:Tmari_1875"/>
<dbReference type="KEGG" id="tmw:THMA_1910"/>
<dbReference type="eggNOG" id="COG1514">
    <property type="taxonomic scope" value="Bacteria"/>
</dbReference>
<dbReference type="InParanoid" id="Q9X2H4"/>
<dbReference type="OrthoDB" id="9789350at2"/>
<dbReference type="Proteomes" id="UP000008183">
    <property type="component" value="Chromosome"/>
</dbReference>
<dbReference type="GO" id="GO:0005829">
    <property type="term" value="C:cytosol"/>
    <property type="evidence" value="ECO:0000318"/>
    <property type="project" value="GO_Central"/>
</dbReference>
<dbReference type="GO" id="GO:0004113">
    <property type="term" value="F:2',3'-cyclic-nucleotide 3'-phosphodiesterase activity"/>
    <property type="evidence" value="ECO:0007669"/>
    <property type="project" value="InterPro"/>
</dbReference>
<dbReference type="GO" id="GO:0034237">
    <property type="term" value="F:protein kinase A regulatory subunit binding"/>
    <property type="evidence" value="ECO:0000318"/>
    <property type="project" value="GO_Central"/>
</dbReference>
<dbReference type="GO" id="GO:0008664">
    <property type="term" value="F:RNA 2',3'-cyclic 3'-phosphodiesterase activity"/>
    <property type="evidence" value="ECO:0007669"/>
    <property type="project" value="UniProtKB-EC"/>
</dbReference>
<dbReference type="FunFam" id="3.90.1140.10:FF:000009">
    <property type="entry name" value="RNA 2',3'-cyclic phosphodiesterase"/>
    <property type="match status" value="1"/>
</dbReference>
<dbReference type="Gene3D" id="3.90.1140.10">
    <property type="entry name" value="Cyclic phosphodiesterase"/>
    <property type="match status" value="1"/>
</dbReference>
<dbReference type="HAMAP" id="MF_01940">
    <property type="entry name" value="RNA_CPDase"/>
    <property type="match status" value="1"/>
</dbReference>
<dbReference type="InterPro" id="IPR009097">
    <property type="entry name" value="Cyclic_Pdiesterase"/>
</dbReference>
<dbReference type="InterPro" id="IPR004175">
    <property type="entry name" value="RNA_CPDase"/>
</dbReference>
<dbReference type="NCBIfam" id="TIGR02258">
    <property type="entry name" value="2_5_ligase"/>
    <property type="match status" value="1"/>
</dbReference>
<dbReference type="PANTHER" id="PTHR35561">
    <property type="entry name" value="RNA 2',3'-CYCLIC PHOSPHODIESTERASE"/>
    <property type="match status" value="1"/>
</dbReference>
<dbReference type="PANTHER" id="PTHR35561:SF1">
    <property type="entry name" value="RNA 2',3'-CYCLIC PHOSPHODIESTERASE"/>
    <property type="match status" value="1"/>
</dbReference>
<dbReference type="Pfam" id="PF13563">
    <property type="entry name" value="2_5_RNA_ligase2"/>
    <property type="match status" value="1"/>
</dbReference>
<dbReference type="SUPFAM" id="SSF55144">
    <property type="entry name" value="LigT-like"/>
    <property type="match status" value="1"/>
</dbReference>
<feature type="chain" id="PRO_0000138969" description="RNA 2',3'-cyclic phosphodiesterase">
    <location>
        <begin position="1"/>
        <end position="187"/>
    </location>
</feature>
<feature type="short sequence motif" description="HXTX 1" evidence="1">
    <location>
        <begin position="40"/>
        <end position="43"/>
    </location>
</feature>
<feature type="short sequence motif" description="HXTX 2" evidence="1">
    <location>
        <begin position="125"/>
        <end position="128"/>
    </location>
</feature>
<feature type="active site" description="Proton donor" evidence="1">
    <location>
        <position position="40"/>
    </location>
</feature>
<feature type="active site" description="Proton acceptor" evidence="1">
    <location>
        <position position="125"/>
    </location>
</feature>
<proteinExistence type="inferred from homology"/>
<evidence type="ECO:0000255" key="1">
    <source>
        <dbReference type="HAMAP-Rule" id="MF_01940"/>
    </source>
</evidence>
<accession>Q9X2H4</accession>
<name>THPR_THEMA</name>
<sequence length="187" mass="22065">MRTFIAIDVNEEVKKQASEIIEKLMKRGFGATWVSEENMHLTLFFLGEVDEQKISEIAEHLCRRVRGFPSFSFTVKGFGYFKRKMSPRVFWLGVENTDRLMKLYEELRNELSHHGFSFEEKFVPHITIGRVKYYPDKWEKLIEDIDFPPIEVAVDRFKIYSSTLTPTGPIYKVLYECQFEGGLIRYA</sequence>
<organism>
    <name type="scientific">Thermotoga maritima (strain ATCC 43589 / DSM 3109 / JCM 10099 / NBRC 100826 / MSB8)</name>
    <dbReference type="NCBI Taxonomy" id="243274"/>
    <lineage>
        <taxon>Bacteria</taxon>
        <taxon>Thermotogati</taxon>
        <taxon>Thermotogota</taxon>
        <taxon>Thermotogae</taxon>
        <taxon>Thermotogales</taxon>
        <taxon>Thermotogaceae</taxon>
        <taxon>Thermotoga</taxon>
    </lineage>
</organism>
<protein>
    <recommendedName>
        <fullName evidence="1">RNA 2',3'-cyclic phosphodiesterase</fullName>
        <shortName evidence="1">RNA 2',3'-CPDase</shortName>
        <ecNumber evidence="1">3.1.4.58</ecNumber>
    </recommendedName>
</protein>